<name>KAD_ECO24</name>
<organism>
    <name type="scientific">Escherichia coli O139:H28 (strain E24377A / ETEC)</name>
    <dbReference type="NCBI Taxonomy" id="331111"/>
    <lineage>
        <taxon>Bacteria</taxon>
        <taxon>Pseudomonadati</taxon>
        <taxon>Pseudomonadota</taxon>
        <taxon>Gammaproteobacteria</taxon>
        <taxon>Enterobacterales</taxon>
        <taxon>Enterobacteriaceae</taxon>
        <taxon>Escherichia</taxon>
    </lineage>
</organism>
<reference key="1">
    <citation type="journal article" date="2008" name="J. Bacteriol.">
        <title>The pangenome structure of Escherichia coli: comparative genomic analysis of E. coli commensal and pathogenic isolates.</title>
        <authorList>
            <person name="Rasko D.A."/>
            <person name="Rosovitz M.J."/>
            <person name="Myers G.S.A."/>
            <person name="Mongodin E.F."/>
            <person name="Fricke W.F."/>
            <person name="Gajer P."/>
            <person name="Crabtree J."/>
            <person name="Sebaihia M."/>
            <person name="Thomson N.R."/>
            <person name="Chaudhuri R."/>
            <person name="Henderson I.R."/>
            <person name="Sperandio V."/>
            <person name="Ravel J."/>
        </authorList>
    </citation>
    <scope>NUCLEOTIDE SEQUENCE [LARGE SCALE GENOMIC DNA]</scope>
    <source>
        <strain>E24377A / ETEC</strain>
    </source>
</reference>
<feature type="chain" id="PRO_1000058822" description="Adenylate kinase">
    <location>
        <begin position="1"/>
        <end position="214"/>
    </location>
</feature>
<feature type="region of interest" description="NMP" evidence="2">
    <location>
        <begin position="30"/>
        <end position="59"/>
    </location>
</feature>
<feature type="region of interest" description="LID">
    <location>
        <begin position="122"/>
        <end position="159"/>
    </location>
</feature>
<feature type="binding site" evidence="2">
    <location>
        <begin position="10"/>
        <end position="15"/>
    </location>
    <ligand>
        <name>ATP</name>
        <dbReference type="ChEBI" id="CHEBI:30616"/>
    </ligand>
</feature>
<feature type="binding site" evidence="2">
    <location>
        <position position="31"/>
    </location>
    <ligand>
        <name>AMP</name>
        <dbReference type="ChEBI" id="CHEBI:456215"/>
    </ligand>
</feature>
<feature type="binding site" evidence="2">
    <location>
        <position position="36"/>
    </location>
    <ligand>
        <name>AMP</name>
        <dbReference type="ChEBI" id="CHEBI:456215"/>
    </ligand>
</feature>
<feature type="binding site" evidence="2">
    <location>
        <begin position="57"/>
        <end position="59"/>
    </location>
    <ligand>
        <name>AMP</name>
        <dbReference type="ChEBI" id="CHEBI:456215"/>
    </ligand>
</feature>
<feature type="binding site" evidence="2">
    <location>
        <begin position="85"/>
        <end position="88"/>
    </location>
    <ligand>
        <name>AMP</name>
        <dbReference type="ChEBI" id="CHEBI:456215"/>
    </ligand>
</feature>
<feature type="binding site" evidence="2">
    <location>
        <position position="92"/>
    </location>
    <ligand>
        <name>AMP</name>
        <dbReference type="ChEBI" id="CHEBI:456215"/>
    </ligand>
</feature>
<feature type="binding site" evidence="2">
    <location>
        <position position="123"/>
    </location>
    <ligand>
        <name>ATP</name>
        <dbReference type="ChEBI" id="CHEBI:30616"/>
    </ligand>
</feature>
<feature type="binding site" evidence="2">
    <location>
        <begin position="132"/>
        <end position="133"/>
    </location>
    <ligand>
        <name>ATP</name>
        <dbReference type="ChEBI" id="CHEBI:30616"/>
    </ligand>
</feature>
<feature type="binding site" evidence="2">
    <location>
        <position position="156"/>
    </location>
    <ligand>
        <name>AMP</name>
        <dbReference type="ChEBI" id="CHEBI:456215"/>
    </ligand>
</feature>
<feature type="binding site" evidence="2">
    <location>
        <position position="167"/>
    </location>
    <ligand>
        <name>AMP</name>
        <dbReference type="ChEBI" id="CHEBI:456215"/>
    </ligand>
</feature>
<feature type="binding site" evidence="2">
    <location>
        <position position="200"/>
    </location>
    <ligand>
        <name>ATP</name>
        <dbReference type="ChEBI" id="CHEBI:30616"/>
    </ligand>
</feature>
<feature type="modified residue" description="N6-acetyllysine" evidence="1">
    <location>
        <position position="192"/>
    </location>
</feature>
<sequence>MRIILLGAPGAGKGTQAQFIMEKYGIPQISTGDMLRAAVKSGSELGKQAKDIMDAGKLVTDELVIALVKERIAQEDCRNGFLLDGFPRTIPQADAMKEAGINVDYVLEFDVPDELIVDRIVGRRVHAPSGRVYHVKFNPPKVEGKDDVTGEELTTRKDDQEETVRKRLVEYHQMTAPLIGYYSKEAEAGNTKYAKVDGTKPVAEVRADLEKILG</sequence>
<keyword id="KW-0007">Acetylation</keyword>
<keyword id="KW-0067">ATP-binding</keyword>
<keyword id="KW-0963">Cytoplasm</keyword>
<keyword id="KW-0418">Kinase</keyword>
<keyword id="KW-0545">Nucleotide biosynthesis</keyword>
<keyword id="KW-0547">Nucleotide-binding</keyword>
<keyword id="KW-1185">Reference proteome</keyword>
<keyword id="KW-0808">Transferase</keyword>
<protein>
    <recommendedName>
        <fullName evidence="2">Adenylate kinase</fullName>
        <shortName evidence="2">AK</shortName>
        <ecNumber evidence="2">2.7.4.3</ecNumber>
    </recommendedName>
    <alternativeName>
        <fullName evidence="2">ATP-AMP transphosphorylase</fullName>
    </alternativeName>
    <alternativeName>
        <fullName evidence="2">ATP:AMP phosphotransferase</fullName>
    </alternativeName>
    <alternativeName>
        <fullName evidence="2">Adenylate monophosphate kinase</fullName>
    </alternativeName>
</protein>
<proteinExistence type="inferred from homology"/>
<accession>A7ZIN4</accession>
<evidence type="ECO:0000250" key="1"/>
<evidence type="ECO:0000255" key="2">
    <source>
        <dbReference type="HAMAP-Rule" id="MF_00235"/>
    </source>
</evidence>
<comment type="function">
    <text evidence="2">Catalyzes the reversible transfer of the terminal phosphate group between ATP and AMP. Plays an important role in cellular energy homeostasis and in adenine nucleotide metabolism.</text>
</comment>
<comment type="catalytic activity">
    <reaction evidence="2">
        <text>AMP + ATP = 2 ADP</text>
        <dbReference type="Rhea" id="RHEA:12973"/>
        <dbReference type="ChEBI" id="CHEBI:30616"/>
        <dbReference type="ChEBI" id="CHEBI:456215"/>
        <dbReference type="ChEBI" id="CHEBI:456216"/>
        <dbReference type="EC" id="2.7.4.3"/>
    </reaction>
</comment>
<comment type="pathway">
    <text evidence="2">Purine metabolism; AMP biosynthesis via salvage pathway; AMP from ADP: step 1/1.</text>
</comment>
<comment type="subunit">
    <text evidence="2">Monomer.</text>
</comment>
<comment type="subcellular location">
    <subcellularLocation>
        <location evidence="2">Cytoplasm</location>
    </subcellularLocation>
</comment>
<comment type="domain">
    <text evidence="2">Consists of three domains, a large central CORE domain and two small peripheral domains, NMPbind and LID, which undergo movements during catalysis. The LID domain closes over the site of phosphoryl transfer upon ATP binding. Assembling and dissambling the active center during each catalytic cycle provides an effective means to prevent ATP hydrolysis.</text>
</comment>
<comment type="similarity">
    <text evidence="2">Belongs to the adenylate kinase family.</text>
</comment>
<dbReference type="EC" id="2.7.4.3" evidence="2"/>
<dbReference type="EMBL" id="CP000800">
    <property type="protein sequence ID" value="ABV16637.1"/>
    <property type="molecule type" value="Genomic_DNA"/>
</dbReference>
<dbReference type="RefSeq" id="WP_001220233.1">
    <property type="nucleotide sequence ID" value="NC_009801.1"/>
</dbReference>
<dbReference type="BMRB" id="A7ZIN4"/>
<dbReference type="SMR" id="A7ZIN4"/>
<dbReference type="GeneID" id="75170492"/>
<dbReference type="KEGG" id="ecw:EcE24377A_0513"/>
<dbReference type="HOGENOM" id="CLU_032354_1_2_6"/>
<dbReference type="UniPathway" id="UPA00588">
    <property type="reaction ID" value="UER00649"/>
</dbReference>
<dbReference type="Proteomes" id="UP000001122">
    <property type="component" value="Chromosome"/>
</dbReference>
<dbReference type="GO" id="GO:0005737">
    <property type="term" value="C:cytoplasm"/>
    <property type="evidence" value="ECO:0007669"/>
    <property type="project" value="UniProtKB-SubCell"/>
</dbReference>
<dbReference type="GO" id="GO:0004017">
    <property type="term" value="F:adenylate kinase activity"/>
    <property type="evidence" value="ECO:0007669"/>
    <property type="project" value="UniProtKB-UniRule"/>
</dbReference>
<dbReference type="GO" id="GO:0005524">
    <property type="term" value="F:ATP binding"/>
    <property type="evidence" value="ECO:0007669"/>
    <property type="project" value="UniProtKB-UniRule"/>
</dbReference>
<dbReference type="GO" id="GO:0044209">
    <property type="term" value="P:AMP salvage"/>
    <property type="evidence" value="ECO:0007669"/>
    <property type="project" value="UniProtKB-UniRule"/>
</dbReference>
<dbReference type="CDD" id="cd01428">
    <property type="entry name" value="ADK"/>
    <property type="match status" value="1"/>
</dbReference>
<dbReference type="FunFam" id="3.40.50.300:FF:000106">
    <property type="entry name" value="Adenylate kinase mitochondrial"/>
    <property type="match status" value="1"/>
</dbReference>
<dbReference type="Gene3D" id="3.40.50.300">
    <property type="entry name" value="P-loop containing nucleotide triphosphate hydrolases"/>
    <property type="match status" value="1"/>
</dbReference>
<dbReference type="HAMAP" id="MF_00235">
    <property type="entry name" value="Adenylate_kinase_Adk"/>
    <property type="match status" value="1"/>
</dbReference>
<dbReference type="InterPro" id="IPR006259">
    <property type="entry name" value="Adenyl_kin_sub"/>
</dbReference>
<dbReference type="InterPro" id="IPR000850">
    <property type="entry name" value="Adenylat/UMP-CMP_kin"/>
</dbReference>
<dbReference type="InterPro" id="IPR033690">
    <property type="entry name" value="Adenylat_kinase_CS"/>
</dbReference>
<dbReference type="InterPro" id="IPR007862">
    <property type="entry name" value="Adenylate_kinase_lid-dom"/>
</dbReference>
<dbReference type="InterPro" id="IPR027417">
    <property type="entry name" value="P-loop_NTPase"/>
</dbReference>
<dbReference type="NCBIfam" id="TIGR01351">
    <property type="entry name" value="adk"/>
    <property type="match status" value="1"/>
</dbReference>
<dbReference type="NCBIfam" id="NF001379">
    <property type="entry name" value="PRK00279.1-1"/>
    <property type="match status" value="1"/>
</dbReference>
<dbReference type="NCBIfam" id="NF001380">
    <property type="entry name" value="PRK00279.1-2"/>
    <property type="match status" value="1"/>
</dbReference>
<dbReference type="NCBIfam" id="NF001381">
    <property type="entry name" value="PRK00279.1-3"/>
    <property type="match status" value="1"/>
</dbReference>
<dbReference type="NCBIfam" id="NF011100">
    <property type="entry name" value="PRK14527.1"/>
    <property type="match status" value="1"/>
</dbReference>
<dbReference type="PANTHER" id="PTHR23359">
    <property type="entry name" value="NUCLEOTIDE KINASE"/>
    <property type="match status" value="1"/>
</dbReference>
<dbReference type="Pfam" id="PF00406">
    <property type="entry name" value="ADK"/>
    <property type="match status" value="1"/>
</dbReference>
<dbReference type="Pfam" id="PF05191">
    <property type="entry name" value="ADK_lid"/>
    <property type="match status" value="1"/>
</dbReference>
<dbReference type="PRINTS" id="PR00094">
    <property type="entry name" value="ADENYLTKNASE"/>
</dbReference>
<dbReference type="SUPFAM" id="SSF52540">
    <property type="entry name" value="P-loop containing nucleoside triphosphate hydrolases"/>
    <property type="match status" value="1"/>
</dbReference>
<dbReference type="PROSITE" id="PS00113">
    <property type="entry name" value="ADENYLATE_KINASE"/>
    <property type="match status" value="1"/>
</dbReference>
<gene>
    <name evidence="2" type="primary">adk</name>
    <name type="ordered locus">EcE24377A_0513</name>
</gene>